<keyword id="KW-0004">4Fe-4S</keyword>
<keyword id="KW-0143">Chaperone</keyword>
<keyword id="KW-0963">Cytoplasm</keyword>
<keyword id="KW-0349">Heme</keyword>
<keyword id="KW-0408">Iron</keyword>
<keyword id="KW-0411">Iron-sulfur</keyword>
<keyword id="KW-0479">Metal-binding</keyword>
<keyword id="KW-1185">Reference proteome</keyword>
<keyword id="KW-0949">S-adenosyl-L-methionine</keyword>
<gene>
    <name evidence="2" type="primary">hemW</name>
    <name type="ordered locus">HI_0463</name>
</gene>
<comment type="function">
    <text evidence="1 2">Probably acts as a heme chaperone, transferring heme to an unknown acceptor. Binds one molecule of heme per monomer, possibly covalently (By similarity). Binds 1 [4Fe-4S] cluster. The cluster is coordinated with 3 cysteines and an exchangeable S-adenosyl-L-methionine (By similarity).</text>
</comment>
<comment type="cofactor">
    <cofactor evidence="4">
        <name>[4Fe-4S] cluster</name>
        <dbReference type="ChEBI" id="CHEBI:49883"/>
    </cofactor>
</comment>
<comment type="subcellular location">
    <subcellularLocation>
        <location evidence="3">Cytoplasm</location>
    </subcellularLocation>
</comment>
<comment type="miscellaneous">
    <text evidence="1">Might carry two S-adenosyl-L-methionine binding sites with only one binding to the iron-sulfur cluster.</text>
</comment>
<comment type="similarity">
    <text evidence="5">Belongs to the anaerobic coproporphyrinogen-III oxidase family. HemW subfamily.</text>
</comment>
<protein>
    <recommendedName>
        <fullName>Heme chaperone HemW</fullName>
    </recommendedName>
    <alternativeName>
        <fullName>Oxygen-independent coproporphyrinogen-III oxidase-like protein HI_0463</fullName>
    </alternativeName>
</protein>
<dbReference type="EMBL" id="L42023">
    <property type="protein sequence ID" value="AAC22122.1"/>
    <property type="molecule type" value="Genomic_DNA"/>
</dbReference>
<dbReference type="PIR" id="B64070">
    <property type="entry name" value="B64070"/>
</dbReference>
<dbReference type="RefSeq" id="NP_438624.1">
    <property type="nucleotide sequence ID" value="NC_000907.1"/>
</dbReference>
<dbReference type="SMR" id="P43899"/>
<dbReference type="STRING" id="71421.HI_0463"/>
<dbReference type="EnsemblBacteria" id="AAC22122">
    <property type="protein sequence ID" value="AAC22122"/>
    <property type="gene ID" value="HI_0463"/>
</dbReference>
<dbReference type="KEGG" id="hin:HI_0463"/>
<dbReference type="PATRIC" id="fig|71421.8.peg.483"/>
<dbReference type="eggNOG" id="COG0635">
    <property type="taxonomic scope" value="Bacteria"/>
</dbReference>
<dbReference type="HOGENOM" id="CLU_027579_2_1_6"/>
<dbReference type="OrthoDB" id="9808022at2"/>
<dbReference type="PhylomeDB" id="P43899"/>
<dbReference type="BioCyc" id="HINF71421:G1GJ1-479-MONOMER"/>
<dbReference type="Proteomes" id="UP000000579">
    <property type="component" value="Chromosome"/>
</dbReference>
<dbReference type="GO" id="GO:0005737">
    <property type="term" value="C:cytoplasm"/>
    <property type="evidence" value="ECO:0000250"/>
    <property type="project" value="UniProtKB"/>
</dbReference>
<dbReference type="GO" id="GO:0051539">
    <property type="term" value="F:4 iron, 4 sulfur cluster binding"/>
    <property type="evidence" value="ECO:0000250"/>
    <property type="project" value="UniProtKB"/>
</dbReference>
<dbReference type="GO" id="GO:0004109">
    <property type="term" value="F:coproporphyrinogen oxidase activity"/>
    <property type="evidence" value="ECO:0007669"/>
    <property type="project" value="InterPro"/>
</dbReference>
<dbReference type="GO" id="GO:0046872">
    <property type="term" value="F:metal ion binding"/>
    <property type="evidence" value="ECO:0007669"/>
    <property type="project" value="UniProtKB-KW"/>
</dbReference>
<dbReference type="GO" id="GO:0006779">
    <property type="term" value="P:porphyrin-containing compound biosynthetic process"/>
    <property type="evidence" value="ECO:0000250"/>
    <property type="project" value="UniProtKB"/>
</dbReference>
<dbReference type="CDD" id="cd01335">
    <property type="entry name" value="Radical_SAM"/>
    <property type="match status" value="1"/>
</dbReference>
<dbReference type="FunFam" id="3.20.20.70:FF:000124">
    <property type="entry name" value="Heme chaperone HemW"/>
    <property type="match status" value="1"/>
</dbReference>
<dbReference type="Gene3D" id="3.20.20.70">
    <property type="entry name" value="Aldolase class I"/>
    <property type="match status" value="1"/>
</dbReference>
<dbReference type="InterPro" id="IPR013785">
    <property type="entry name" value="Aldolase_TIM"/>
</dbReference>
<dbReference type="InterPro" id="IPR034505">
    <property type="entry name" value="Coproporphyrinogen-III_oxidase"/>
</dbReference>
<dbReference type="InterPro" id="IPR006638">
    <property type="entry name" value="Elp3/MiaA/NifB-like_rSAM"/>
</dbReference>
<dbReference type="InterPro" id="IPR010723">
    <property type="entry name" value="HemN_C"/>
</dbReference>
<dbReference type="InterPro" id="IPR004559">
    <property type="entry name" value="HemW-like"/>
</dbReference>
<dbReference type="InterPro" id="IPR007197">
    <property type="entry name" value="rSAM"/>
</dbReference>
<dbReference type="NCBIfam" id="TIGR00539">
    <property type="entry name" value="hemN_rel"/>
    <property type="match status" value="1"/>
</dbReference>
<dbReference type="PANTHER" id="PTHR13932">
    <property type="entry name" value="COPROPORPHYRINIGEN III OXIDASE"/>
    <property type="match status" value="1"/>
</dbReference>
<dbReference type="PANTHER" id="PTHR13932:SF5">
    <property type="entry name" value="RADICAL S-ADENOSYL METHIONINE DOMAIN-CONTAINING PROTEIN 1, MITOCHONDRIAL"/>
    <property type="match status" value="1"/>
</dbReference>
<dbReference type="Pfam" id="PF06969">
    <property type="entry name" value="HemN_C"/>
    <property type="match status" value="1"/>
</dbReference>
<dbReference type="Pfam" id="PF04055">
    <property type="entry name" value="Radical_SAM"/>
    <property type="match status" value="1"/>
</dbReference>
<dbReference type="SFLD" id="SFLDG01065">
    <property type="entry name" value="anaerobic_coproporphyrinogen-I"/>
    <property type="match status" value="1"/>
</dbReference>
<dbReference type="SFLD" id="SFLDG01082">
    <property type="entry name" value="B12-binding_domain_containing"/>
    <property type="match status" value="1"/>
</dbReference>
<dbReference type="SFLD" id="SFLDF00562">
    <property type="entry name" value="HemN-like__clustered_with_heat"/>
    <property type="match status" value="1"/>
</dbReference>
<dbReference type="SFLD" id="SFLDF00288">
    <property type="entry name" value="HemN-like__clustered_with_nucl"/>
    <property type="match status" value="1"/>
</dbReference>
<dbReference type="SMART" id="SM00729">
    <property type="entry name" value="Elp3"/>
    <property type="match status" value="1"/>
</dbReference>
<dbReference type="SUPFAM" id="SSF102114">
    <property type="entry name" value="Radical SAM enzymes"/>
    <property type="match status" value="1"/>
</dbReference>
<dbReference type="PROSITE" id="PS51918">
    <property type="entry name" value="RADICAL_SAM"/>
    <property type="match status" value="1"/>
</dbReference>
<proteinExistence type="inferred from homology"/>
<organism>
    <name type="scientific">Haemophilus influenzae (strain ATCC 51907 / DSM 11121 / KW20 / Rd)</name>
    <dbReference type="NCBI Taxonomy" id="71421"/>
    <lineage>
        <taxon>Bacteria</taxon>
        <taxon>Pseudomonadati</taxon>
        <taxon>Pseudomonadota</taxon>
        <taxon>Gammaproteobacteria</taxon>
        <taxon>Pasteurellales</taxon>
        <taxon>Pasteurellaceae</taxon>
        <taxon>Haemophilus</taxon>
    </lineage>
</organism>
<sequence>MPKLPPLSLYIHIPWCVQKCPYCDFNSHAQKSDIPEQDYIYHLLQDLQADLQRFKDSIQQRKLHSIFIGGGTPSLFSAESIAYLLKEIKKQIDFEDNIEITLEANPGTVEAERFKGYVSAGIMRISMGIQSFNDDKLQRLGRIHNAAEAKSAVNLAKVSGLKSFNLDLMHGLPNQTLEEALDDLRQAIELSPPHISWYQLTIEPNTMFAYRPPKLPDDDALWDIFEQGHQLLTMAGYQQYETSAYAKAGFQCKHNLNYWRFGDYLAIGCGAHGKLTFPTGEITRFSKTKHPKGYLRGEYLYEEKNVPKIDRPFEFFMNRFRLLEAVPKQEFEDYTGLSQSAVKNQIDFAIQQNYIVENADSWQITEHGKLFLNELLELFLTEE</sequence>
<name>HEMW_HAEIN</name>
<evidence type="ECO:0000250" key="1">
    <source>
        <dbReference type="UniProtKB" id="P32131"/>
    </source>
</evidence>
<evidence type="ECO:0000250" key="2">
    <source>
        <dbReference type="UniProtKB" id="P52062"/>
    </source>
</evidence>
<evidence type="ECO:0000250" key="3">
    <source>
        <dbReference type="UniProtKB" id="Q9CGF7"/>
    </source>
</evidence>
<evidence type="ECO:0000255" key="4">
    <source>
        <dbReference type="PROSITE-ProRule" id="PRU01266"/>
    </source>
</evidence>
<evidence type="ECO:0000305" key="5"/>
<reference key="1">
    <citation type="journal article" date="1995" name="Science">
        <title>Whole-genome random sequencing and assembly of Haemophilus influenzae Rd.</title>
        <authorList>
            <person name="Fleischmann R.D."/>
            <person name="Adams M.D."/>
            <person name="White O."/>
            <person name="Clayton R.A."/>
            <person name="Kirkness E.F."/>
            <person name="Kerlavage A.R."/>
            <person name="Bult C.J."/>
            <person name="Tomb J.-F."/>
            <person name="Dougherty B.A."/>
            <person name="Merrick J.M."/>
            <person name="McKenney K."/>
            <person name="Sutton G.G."/>
            <person name="FitzHugh W."/>
            <person name="Fields C.A."/>
            <person name="Gocayne J.D."/>
            <person name="Scott J.D."/>
            <person name="Shirley R."/>
            <person name="Liu L.-I."/>
            <person name="Glodek A."/>
            <person name="Kelley J.M."/>
            <person name="Weidman J.F."/>
            <person name="Phillips C.A."/>
            <person name="Spriggs T."/>
            <person name="Hedblom E."/>
            <person name="Cotton M.D."/>
            <person name="Utterback T.R."/>
            <person name="Hanna M.C."/>
            <person name="Nguyen D.T."/>
            <person name="Saudek D.M."/>
            <person name="Brandon R.C."/>
            <person name="Fine L.D."/>
            <person name="Fritchman J.L."/>
            <person name="Fuhrmann J.L."/>
            <person name="Geoghagen N.S.M."/>
            <person name="Gnehm C.L."/>
            <person name="McDonald L.A."/>
            <person name="Small K.V."/>
            <person name="Fraser C.M."/>
            <person name="Smith H.O."/>
            <person name="Venter J.C."/>
        </authorList>
    </citation>
    <scope>NUCLEOTIDE SEQUENCE [LARGE SCALE GENOMIC DNA]</scope>
    <source>
        <strain>ATCC 51907 / DSM 11121 / KW20 / Rd</strain>
    </source>
</reference>
<feature type="chain" id="PRO_0000109957" description="Heme chaperone HemW">
    <location>
        <begin position="1"/>
        <end position="383"/>
    </location>
</feature>
<feature type="domain" description="Radical SAM core" evidence="4">
    <location>
        <begin position="1"/>
        <end position="241"/>
    </location>
</feature>
<feature type="binding site" evidence="1">
    <location>
        <position position="10"/>
    </location>
    <ligand>
        <name>S-adenosyl-L-methionine</name>
        <dbReference type="ChEBI" id="CHEBI:59789"/>
        <label>1</label>
    </ligand>
</feature>
<feature type="binding site" evidence="1">
    <location>
        <position position="16"/>
    </location>
    <ligand>
        <name>[4Fe-4S] cluster</name>
        <dbReference type="ChEBI" id="CHEBI:49883"/>
        <note>4Fe-4S-S-AdoMet</note>
    </ligand>
</feature>
<feature type="binding site" evidence="1">
    <location>
        <position position="20"/>
    </location>
    <ligand>
        <name>[4Fe-4S] cluster</name>
        <dbReference type="ChEBI" id="CHEBI:49883"/>
        <note>4Fe-4S-S-AdoMet</note>
    </ligand>
</feature>
<feature type="binding site" evidence="1">
    <location>
        <position position="23"/>
    </location>
    <ligand>
        <name>[4Fe-4S] cluster</name>
        <dbReference type="ChEBI" id="CHEBI:49883"/>
        <note>4Fe-4S-S-AdoMet</note>
    </ligand>
</feature>
<feature type="binding site" evidence="1">
    <location>
        <position position="70"/>
    </location>
    <ligand>
        <name>S-adenosyl-L-methionine</name>
        <dbReference type="ChEBI" id="CHEBI:59789"/>
        <label>1</label>
    </ligand>
</feature>
<feature type="binding site" evidence="1">
    <location>
        <begin position="71"/>
        <end position="72"/>
    </location>
    <ligand>
        <name>S-adenosyl-L-methionine</name>
        <dbReference type="ChEBI" id="CHEBI:59789"/>
        <label>2</label>
    </ligand>
</feature>
<feature type="binding site" evidence="1">
    <location>
        <position position="103"/>
    </location>
    <ligand>
        <name>S-adenosyl-L-methionine</name>
        <dbReference type="ChEBI" id="CHEBI:59789"/>
        <label>1</label>
    </ligand>
</feature>
<feature type="binding site" evidence="1">
    <location>
        <position position="130"/>
    </location>
    <ligand>
        <name>S-adenosyl-L-methionine</name>
        <dbReference type="ChEBI" id="CHEBI:59789"/>
        <label>2</label>
    </ligand>
</feature>
<feature type="binding site" evidence="1">
    <location>
        <position position="142"/>
    </location>
    <ligand>
        <name>S-adenosyl-L-methionine</name>
        <dbReference type="ChEBI" id="CHEBI:59789"/>
        <label>2</label>
    </ligand>
</feature>
<feature type="binding site" evidence="1">
    <location>
        <position position="167"/>
    </location>
    <ligand>
        <name>S-adenosyl-L-methionine</name>
        <dbReference type="ChEBI" id="CHEBI:59789"/>
        <label>2</label>
    </ligand>
</feature>
<accession>P43899</accession>